<sequence>MSGAGPASPGRSGSALPLPLPLSLSLTGDRKREVPAAGTLLQPIIKDVGEIYSRLLDHRPVIQGEIRYFVKEFEEKRGLRELRVLENLKKTIFETNEDILPKCKQSMHDNLNEVLQRLQAANDTIHKLQEKEHEKRKIQADKLMAGEEKRIAQQETFLQEQQSKREEVDEEHRKAMERLKEQYSEMEKELAKYVSF</sequence>
<reference key="1">
    <citation type="journal article" date="2005" name="Genome Biol.">
        <title>Full-length cDNAs from chicken bursal lymphocytes to facilitate gene function analysis.</title>
        <authorList>
            <person name="Caldwell R.B."/>
            <person name="Kierzek A.M."/>
            <person name="Arakawa H."/>
            <person name="Bezzubov Y."/>
            <person name="Zaim J."/>
            <person name="Fiedler P."/>
            <person name="Kutter S."/>
            <person name="Blagodatski A."/>
            <person name="Kostovska D."/>
            <person name="Koter M."/>
            <person name="Plachy J."/>
            <person name="Carninci P."/>
            <person name="Hayashizaki Y."/>
            <person name="Buerstedde J.-M."/>
        </authorList>
    </citation>
    <scope>NUCLEOTIDE SEQUENCE [LARGE SCALE MRNA]</scope>
    <source>
        <strain>CB</strain>
        <tissue>Bursa of Fabricius</tissue>
    </source>
</reference>
<proteinExistence type="evidence at transcript level"/>
<accession>Q5ZK77</accession>
<name>BL1S5_CHICK</name>
<gene>
    <name type="primary">BLOC1S5</name>
    <name type="synonym">MUTED</name>
    <name type="ORF">RCJMB04_12k14</name>
</gene>
<protein>
    <recommendedName>
        <fullName>Biogenesis of lysosome-related organelles complex 1 subunit 5</fullName>
        <shortName>BLOC-1 subunit 5</shortName>
    </recommendedName>
    <alternativeName>
        <fullName>Protein Muted homolog</fullName>
    </alternativeName>
</protein>
<comment type="function">
    <text evidence="1">Component of the BLOC-1 complex, a complex that is required for normal biogenesis of lysosome-related organelles (LRO), such as platelet dense granules and melanosomes. Plays a role in intracellular vesicle trafficking (By similarity).</text>
</comment>
<comment type="subunit">
    <text evidence="1">Component of the biogenesis of lysosome-related organelles complex 1 (BLOC-1).</text>
</comment>
<comment type="similarity">
    <text evidence="3">Belongs to the BLOC1S5 family.</text>
</comment>
<dbReference type="EMBL" id="AJ720207">
    <property type="protein sequence ID" value="CAG31866.1"/>
    <property type="molecule type" value="mRNA"/>
</dbReference>
<dbReference type="RefSeq" id="NP_001006373.1">
    <property type="nucleotide sequence ID" value="NM_001006373.2"/>
</dbReference>
<dbReference type="SMR" id="Q5ZK77"/>
<dbReference type="FunCoup" id="Q5ZK77">
    <property type="interactions" value="1558"/>
</dbReference>
<dbReference type="STRING" id="9031.ENSGALP00000063848"/>
<dbReference type="PaxDb" id="9031-ENSGALP00000020823"/>
<dbReference type="Ensembl" id="ENSGALT00010024939.1">
    <property type="protein sequence ID" value="ENSGALP00010014164.1"/>
    <property type="gene ID" value="ENSGALG00010010425.1"/>
</dbReference>
<dbReference type="GeneID" id="420866"/>
<dbReference type="KEGG" id="gga:420866"/>
<dbReference type="CTD" id="63915"/>
<dbReference type="VEuPathDB" id="HostDB:geneid_420866"/>
<dbReference type="eggNOG" id="ENOG502S2QH">
    <property type="taxonomic scope" value="Eukaryota"/>
</dbReference>
<dbReference type="GeneTree" id="ENSGT00390000016974"/>
<dbReference type="HOGENOM" id="CLU_110751_1_0_1"/>
<dbReference type="InParanoid" id="Q5ZK77"/>
<dbReference type="OMA" id="MHGNLNE"/>
<dbReference type="OrthoDB" id="18964at2759"/>
<dbReference type="PhylomeDB" id="Q5ZK77"/>
<dbReference type="TreeFam" id="TF332943"/>
<dbReference type="PRO" id="PR:Q5ZK77"/>
<dbReference type="Proteomes" id="UP000000539">
    <property type="component" value="Chromosome 2"/>
</dbReference>
<dbReference type="Bgee" id="ENSGALG00000012782">
    <property type="expression patterns" value="Expressed in cerebellum and 13 other cell types or tissues"/>
</dbReference>
<dbReference type="GO" id="GO:1904115">
    <property type="term" value="C:axon cytoplasm"/>
    <property type="evidence" value="ECO:0007669"/>
    <property type="project" value="GOC"/>
</dbReference>
<dbReference type="GO" id="GO:0031083">
    <property type="term" value="C:BLOC-1 complex"/>
    <property type="evidence" value="ECO:0000318"/>
    <property type="project" value="GO_Central"/>
</dbReference>
<dbReference type="GO" id="GO:1990742">
    <property type="term" value="C:microvesicle"/>
    <property type="evidence" value="ECO:0007669"/>
    <property type="project" value="Ensembl"/>
</dbReference>
<dbReference type="GO" id="GO:0030133">
    <property type="term" value="C:transport vesicle"/>
    <property type="evidence" value="ECO:0007669"/>
    <property type="project" value="Ensembl"/>
</dbReference>
<dbReference type="GO" id="GO:0048490">
    <property type="term" value="P:anterograde synaptic vesicle transport"/>
    <property type="evidence" value="ECO:0007669"/>
    <property type="project" value="Ensembl"/>
</dbReference>
<dbReference type="GO" id="GO:0035646">
    <property type="term" value="P:endosome to melanosome transport"/>
    <property type="evidence" value="ECO:0007669"/>
    <property type="project" value="Ensembl"/>
</dbReference>
<dbReference type="GO" id="GO:0032402">
    <property type="term" value="P:melanosome transport"/>
    <property type="evidence" value="ECO:0007669"/>
    <property type="project" value="Ensembl"/>
</dbReference>
<dbReference type="GO" id="GO:0032474">
    <property type="term" value="P:otolith morphogenesis"/>
    <property type="evidence" value="ECO:0007669"/>
    <property type="project" value="Ensembl"/>
</dbReference>
<dbReference type="GO" id="GO:0050942">
    <property type="term" value="P:positive regulation of pigment cell differentiation"/>
    <property type="evidence" value="ECO:0007669"/>
    <property type="project" value="Ensembl"/>
</dbReference>
<dbReference type="GO" id="GO:0016192">
    <property type="term" value="P:vesicle-mediated transport"/>
    <property type="evidence" value="ECO:0007669"/>
    <property type="project" value="Ensembl"/>
</dbReference>
<dbReference type="InterPro" id="IPR017243">
    <property type="entry name" value="Bloc1s5"/>
</dbReference>
<dbReference type="PANTHER" id="PTHR31784">
    <property type="entry name" value="BIOGENESIS OF LYSOSOME-RELATED ORGANELLES COMPLEX 1 SUBUNIT 5"/>
    <property type="match status" value="1"/>
</dbReference>
<dbReference type="PANTHER" id="PTHR31784:SF2">
    <property type="entry name" value="BIOGENESIS OF LYSOSOME-RELATED ORGANELLES COMPLEX 1 SUBUNIT 5"/>
    <property type="match status" value="1"/>
</dbReference>
<dbReference type="Pfam" id="PF14942">
    <property type="entry name" value="Muted"/>
    <property type="match status" value="1"/>
</dbReference>
<dbReference type="PIRSF" id="PIRSF037610">
    <property type="entry name" value="BLOC-1_complex_muted_subunit"/>
    <property type="match status" value="1"/>
</dbReference>
<keyword id="KW-0175">Coiled coil</keyword>
<keyword id="KW-1185">Reference proteome</keyword>
<organism>
    <name type="scientific">Gallus gallus</name>
    <name type="common">Chicken</name>
    <dbReference type="NCBI Taxonomy" id="9031"/>
    <lineage>
        <taxon>Eukaryota</taxon>
        <taxon>Metazoa</taxon>
        <taxon>Chordata</taxon>
        <taxon>Craniata</taxon>
        <taxon>Vertebrata</taxon>
        <taxon>Euteleostomi</taxon>
        <taxon>Archelosauria</taxon>
        <taxon>Archosauria</taxon>
        <taxon>Dinosauria</taxon>
        <taxon>Saurischia</taxon>
        <taxon>Theropoda</taxon>
        <taxon>Coelurosauria</taxon>
        <taxon>Aves</taxon>
        <taxon>Neognathae</taxon>
        <taxon>Galloanserae</taxon>
        <taxon>Galliformes</taxon>
        <taxon>Phasianidae</taxon>
        <taxon>Phasianinae</taxon>
        <taxon>Gallus</taxon>
    </lineage>
</organism>
<evidence type="ECO:0000250" key="1"/>
<evidence type="ECO:0000255" key="2"/>
<evidence type="ECO:0000305" key="3"/>
<feature type="chain" id="PRO_0000330835" description="Biogenesis of lysosome-related organelles complex 1 subunit 5">
    <location>
        <begin position="1"/>
        <end position="196"/>
    </location>
</feature>
<feature type="coiled-coil region" evidence="2">
    <location>
        <begin position="103"/>
        <end position="196"/>
    </location>
</feature>